<dbReference type="EMBL" id="AB040288">
    <property type="protein sequence ID" value="BAB17672.1"/>
    <property type="molecule type" value="mRNA"/>
</dbReference>
<dbReference type="EMBL" id="AF330059">
    <property type="protein sequence ID" value="AAK94203.2"/>
    <property type="molecule type" value="mRNA"/>
</dbReference>
<dbReference type="RefSeq" id="NP_076442.1">
    <property type="nucleotide sequence ID" value="NM_023952.1"/>
</dbReference>
<dbReference type="FunCoup" id="Q9ESQ9">
    <property type="interactions" value="1"/>
</dbReference>
<dbReference type="STRING" id="10116.ENSRNOP00000014437"/>
<dbReference type="PhosphoSitePlus" id="Q9ESQ9"/>
<dbReference type="PaxDb" id="10116-ENSRNOP00000014437"/>
<dbReference type="GeneID" id="60570"/>
<dbReference type="KEGG" id="rno:60570"/>
<dbReference type="UCSC" id="RGD:61815">
    <molecule id="Q9ESQ9-1"/>
    <property type="organism name" value="rat"/>
</dbReference>
<dbReference type="AGR" id="RGD:61815"/>
<dbReference type="CTD" id="64111"/>
<dbReference type="RGD" id="61815">
    <property type="gene designation" value="Npvf"/>
</dbReference>
<dbReference type="eggNOG" id="ENOG502S5H9">
    <property type="taxonomic scope" value="Eukaryota"/>
</dbReference>
<dbReference type="InParanoid" id="Q9ESQ9"/>
<dbReference type="PhylomeDB" id="Q9ESQ9"/>
<dbReference type="PRO" id="PR:Q9ESQ9"/>
<dbReference type="Proteomes" id="UP000002494">
    <property type="component" value="Unplaced"/>
</dbReference>
<dbReference type="GO" id="GO:0005615">
    <property type="term" value="C:extracellular space"/>
    <property type="evidence" value="ECO:0000266"/>
    <property type="project" value="RGD"/>
</dbReference>
<dbReference type="GO" id="GO:0160041">
    <property type="term" value="F:neuropeptide activity"/>
    <property type="evidence" value="ECO:0000266"/>
    <property type="project" value="RGD"/>
</dbReference>
<dbReference type="GO" id="GO:0005102">
    <property type="term" value="F:signaling receptor binding"/>
    <property type="evidence" value="ECO:0000314"/>
    <property type="project" value="RGD"/>
</dbReference>
<dbReference type="GO" id="GO:0032277">
    <property type="term" value="P:negative regulation of gonadotropin secretion"/>
    <property type="evidence" value="ECO:0000266"/>
    <property type="project" value="RGD"/>
</dbReference>
<dbReference type="GO" id="GO:0007218">
    <property type="term" value="P:neuropeptide signaling pathway"/>
    <property type="evidence" value="ECO:0000315"/>
    <property type="project" value="RGD"/>
</dbReference>
<dbReference type="InterPro" id="IPR026297">
    <property type="entry name" value="FMRFamide-related/fGRP"/>
</dbReference>
<dbReference type="PANTHER" id="PTHR14403:SF6">
    <property type="entry name" value="PRO-FMRFAMIDE-RELATED NEUROPEPTIDE VF"/>
    <property type="match status" value="1"/>
</dbReference>
<dbReference type="PANTHER" id="PTHR14403">
    <property type="entry name" value="RFAMIDE PEPTIDE GONADOTROPIN INHIBITORY HORMONE"/>
    <property type="match status" value="1"/>
</dbReference>
<feature type="signal peptide" evidence="3">
    <location>
        <begin position="1"/>
        <end position="26"/>
    </location>
</feature>
<feature type="propeptide" id="PRO_0000009932">
    <location>
        <begin position="27"/>
        <end position="57"/>
    </location>
</feature>
<feature type="peptide" id="PRO_0000009933" description="Neuropeptide NPSF">
    <location>
        <begin position="58"/>
        <end position="94"/>
    </location>
</feature>
<feature type="peptide" id="PRO_0000401172" description="Neuropeptide RFRP-1" evidence="3">
    <location>
        <begin position="83"/>
        <end position="94"/>
    </location>
</feature>
<feature type="propeptide" id="PRO_0000009934">
    <location>
        <begin position="97"/>
        <end position="106"/>
    </location>
</feature>
<feature type="peptide" id="PRO_0000009935" description="Neuropeptide NPVF">
    <location>
        <begin position="108"/>
        <end position="125"/>
    </location>
</feature>
<feature type="propeptide" id="PRO_0000009936">
    <location>
        <begin position="128"/>
        <end position="203"/>
    </location>
</feature>
<feature type="region of interest" description="Disordered" evidence="4">
    <location>
        <begin position="161"/>
        <end position="186"/>
    </location>
</feature>
<feature type="compositionally biased region" description="Basic and acidic residues" evidence="4">
    <location>
        <begin position="171"/>
        <end position="186"/>
    </location>
</feature>
<feature type="modified residue" description="Phenylalanine amide" evidence="1">
    <location>
        <position position="94"/>
    </location>
</feature>
<feature type="modified residue" description="Phenylalanine amide" evidence="7">
    <location>
        <position position="125"/>
    </location>
</feature>
<feature type="splice variant" id="VSP_039964" description="In isoform 2." evidence="8">
    <location>
        <begin position="174"/>
        <end position="203"/>
    </location>
</feature>
<reference evidence="9" key="1">
    <citation type="journal article" date="2000" name="Nat. Cell Biol.">
        <title>New neuropeptides containing carboxy-terminal RFamide and their receptor in mammals.</title>
        <authorList>
            <person name="Hinuma S."/>
            <person name="Shintani Y."/>
            <person name="Fukusumi S."/>
            <person name="Iijima N."/>
            <person name="Matsumoto Y."/>
            <person name="Hosoya M."/>
            <person name="Fujii R."/>
            <person name="Watanabe T."/>
            <person name="Kikuchi K."/>
            <person name="Terao Y."/>
            <person name="Yano T."/>
            <person name="Yamamoto T."/>
            <person name="Kawamata Y."/>
            <person name="Habata Y."/>
            <person name="Asada M."/>
            <person name="Kitada C."/>
            <person name="Kurokawa T."/>
            <person name="Onda H."/>
            <person name="Nishimura O."/>
            <person name="Tanaka M."/>
            <person name="Ibata Y."/>
            <person name="Fujino M."/>
        </authorList>
    </citation>
    <scope>NUCLEOTIDE SEQUENCE [MRNA] (ISOFORM 1)</scope>
    <scope>TISSUE SPECIFICITY</scope>
    <source>
        <tissue>Brain</tissue>
    </source>
</reference>
<reference evidence="9" key="2">
    <citation type="journal article" date="2001" name="J. Biol. Chem.">
        <title>Identification and characterization of novel mammalian neuropeptide FF-like peptides that attenuate morphine-induced antinociception.</title>
        <authorList>
            <person name="Liu Q."/>
            <person name="Guan X.-M."/>
            <person name="Martin W.J."/>
            <person name="McDonald T.P."/>
            <person name="Clements M.K."/>
            <person name="Jiang Q."/>
            <person name="Zeng Z."/>
            <person name="Jacobson M."/>
            <person name="Williams D.L. Jr."/>
            <person name="Yu H."/>
            <person name="Bomford D."/>
            <person name="Figueroa D."/>
            <person name="Mallee J."/>
            <person name="Wang R."/>
            <person name="Evans J."/>
            <person name="Gould R."/>
            <person name="Austin C.P."/>
        </authorList>
    </citation>
    <scope>NUCLEOTIDE SEQUENCE [MRNA] (ISOFORM 2)</scope>
    <scope>FUNCTION</scope>
    <scope>TISSUE SPECIFICITY</scope>
    <source>
        <strain>Sprague-Dawley</strain>
        <tissue>Brain</tissue>
    </source>
</reference>
<reference evidence="9" key="3">
    <citation type="journal article" date="2002" name="FEBS Lett.">
        <title>A novel rat hypothalamic RFamide-related peptide identified by immunoaffinity chromatography and mass spectrometry.</title>
        <authorList>
            <person name="Ukena K."/>
            <person name="Iwakoshi E."/>
            <person name="Minakata H."/>
            <person name="Tsutsui K."/>
        </authorList>
    </citation>
    <scope>PROTEIN SEQUENCE OF 108-125</scope>
    <scope>AMIDATION AT PHE-125</scope>
    <scope>SYNTHESIS</scope>
    <scope>MASS SPECTROMETRY</scope>
    <source>
        <strain>Donryu</strain>
        <tissue>Hypothalamus</tissue>
    </source>
</reference>
<keyword id="KW-0025">Alternative splicing</keyword>
<keyword id="KW-0027">Amidation</keyword>
<keyword id="KW-0165">Cleavage on pair of basic residues</keyword>
<keyword id="KW-0903">Direct protein sequencing</keyword>
<keyword id="KW-0527">Neuropeptide</keyword>
<keyword id="KW-1185">Reference proteome</keyword>
<keyword id="KW-0964">Secreted</keyword>
<keyword id="KW-0732">Signal</keyword>
<sequence>MEIISSKRFILLTLATSSFLTSNTLCSDELMMPHFHSKEGYGKYYQLRGIPKGVKERSVTFQELKDWGAKKDIKMSPAPANKVPHSAANLPLRFGRNIEDRRSPRARANMEAGTMSHFPSLPQRFGRTTARRITKTLAGLPQKSLHSLASSELLYAMTRQHQEIQSPGQEQPRKRVFTETDDAERKQEKIGNLQPVLQGAMKL</sequence>
<protein>
    <recommendedName>
        <fullName>Pro-FMRFamide-related neuropeptide VF</fullName>
    </recommendedName>
    <alternativeName>
        <fullName>FMRFamide-related peptides</fullName>
    </alternativeName>
    <component>
        <recommendedName>
            <fullName>Neuropeptide NPSF</fullName>
        </recommendedName>
    </component>
    <component>
        <recommendedName>
            <fullName>Neuropeptide RFRP-1</fullName>
        </recommendedName>
    </component>
    <component>
        <recommendedName>
            <fullName>Neuropeptide NPVF</fullName>
        </recommendedName>
        <alternativeName>
            <fullName>Neuropeptide RFRP-2</fullName>
        </alternativeName>
    </component>
</protein>
<comment type="function">
    <molecule>Neuropeptide RFRP-1</molecule>
    <text evidence="2 6">Efficiently inhibits forskolin-induced production of cAMP. Acts as a potent negative regulator of gonadotropin synthesis and secretion (By similarity). Induces secretion of prolactin (PubMed:11481330).</text>
</comment>
<comment type="function">
    <molecule>Neuropeptide NPVF</molecule>
    <text evidence="2">Efficiently inhibits forskolin-induced production of cAMP. Blocks morphine-induced analgesia.</text>
</comment>
<comment type="subcellular location">
    <subcellularLocation>
        <location evidence="2">Secreted</location>
    </subcellularLocation>
</comment>
<comment type="alternative products">
    <event type="alternative splicing"/>
    <isoform>
        <id>Q9ESQ9-1</id>
        <name>1</name>
        <sequence type="displayed"/>
    </isoform>
    <isoform>
        <id>Q9ESQ9-2</id>
        <name>2</name>
        <sequence type="described" ref="VSP_039964"/>
    </isoform>
</comment>
<comment type="tissue specificity">
    <text evidence="5 6">Isoform 1 is expressed at high levels in the hypothalamus and eye. Isoform 2 is specifically expressed in a region between the dorsomedial hypothalamic and ventromedial hypothalamic nuclei.</text>
</comment>
<comment type="mass spectrometry">
    <molecule>Neuropeptide NPVF</molecule>
</comment>
<comment type="similarity">
    <text evidence="9">Belongs to the FARP (FMRFamide related peptide) family.</text>
</comment>
<accession>Q9ESQ9</accession>
<accession>Q920A3</accession>
<evidence type="ECO:0000250" key="1"/>
<evidence type="ECO:0000250" key="2">
    <source>
        <dbReference type="UniProtKB" id="Q9HCQ7"/>
    </source>
</evidence>
<evidence type="ECO:0000255" key="3"/>
<evidence type="ECO:0000256" key="4">
    <source>
        <dbReference type="SAM" id="MobiDB-lite"/>
    </source>
</evidence>
<evidence type="ECO:0000269" key="5">
    <source>
    </source>
</evidence>
<evidence type="ECO:0000269" key="6">
    <source>
    </source>
</evidence>
<evidence type="ECO:0000269" key="7">
    <source>
    </source>
</evidence>
<evidence type="ECO:0000303" key="8">
    <source>
    </source>
</evidence>
<evidence type="ECO:0000305" key="9"/>
<evidence type="ECO:0000312" key="10">
    <source>
        <dbReference type="EMBL" id="BAB17672.1"/>
    </source>
</evidence>
<organism evidence="10">
    <name type="scientific">Rattus norvegicus</name>
    <name type="common">Rat</name>
    <dbReference type="NCBI Taxonomy" id="10116"/>
    <lineage>
        <taxon>Eukaryota</taxon>
        <taxon>Metazoa</taxon>
        <taxon>Chordata</taxon>
        <taxon>Craniata</taxon>
        <taxon>Vertebrata</taxon>
        <taxon>Euteleostomi</taxon>
        <taxon>Mammalia</taxon>
        <taxon>Eutheria</taxon>
        <taxon>Euarchontoglires</taxon>
        <taxon>Glires</taxon>
        <taxon>Rodentia</taxon>
        <taxon>Myomorpha</taxon>
        <taxon>Muroidea</taxon>
        <taxon>Muridae</taxon>
        <taxon>Murinae</taxon>
        <taxon>Rattus</taxon>
    </lineage>
</organism>
<name>NPVF_RAT</name>
<proteinExistence type="evidence at protein level"/>
<gene>
    <name type="primary">Npvf</name>
    <name type="synonym">Rfrp</name>
</gene>